<name>NADE_BURP1</name>
<proteinExistence type="evidence at protein level"/>
<keyword id="KW-0002">3D-structure</keyword>
<keyword id="KW-0067">ATP-binding</keyword>
<keyword id="KW-0436">Ligase</keyword>
<keyword id="KW-0460">Magnesium</keyword>
<keyword id="KW-0479">Metal-binding</keyword>
<keyword id="KW-0520">NAD</keyword>
<keyword id="KW-0547">Nucleotide-binding</keyword>
<comment type="function">
    <text evidence="1">Catalyzes the ATP-dependent amidation of deamido-NAD to form NAD. Uses ammonia as a nitrogen source.</text>
</comment>
<comment type="catalytic activity">
    <reaction evidence="1">
        <text>deamido-NAD(+) + NH4(+) + ATP = AMP + diphosphate + NAD(+) + H(+)</text>
        <dbReference type="Rhea" id="RHEA:21188"/>
        <dbReference type="ChEBI" id="CHEBI:15378"/>
        <dbReference type="ChEBI" id="CHEBI:28938"/>
        <dbReference type="ChEBI" id="CHEBI:30616"/>
        <dbReference type="ChEBI" id="CHEBI:33019"/>
        <dbReference type="ChEBI" id="CHEBI:57540"/>
        <dbReference type="ChEBI" id="CHEBI:58437"/>
        <dbReference type="ChEBI" id="CHEBI:456215"/>
        <dbReference type="EC" id="6.3.1.5"/>
    </reaction>
</comment>
<comment type="pathway">
    <text evidence="1">Cofactor biosynthesis; NAD(+) biosynthesis; NAD(+) from deamido-NAD(+) (ammonia route): step 1/1.</text>
</comment>
<comment type="subunit">
    <text evidence="1">Homodimer.</text>
</comment>
<comment type="similarity">
    <text evidence="1">Belongs to the NAD synthetase family.</text>
</comment>
<gene>
    <name evidence="1" type="primary">nadE</name>
    <name type="ordered locus">BURPS1710b_A0515</name>
</gene>
<accession>Q3JL79</accession>
<protein>
    <recommendedName>
        <fullName evidence="1">NH(3)-dependent NAD(+) synthetase</fullName>
        <ecNumber evidence="1">6.3.1.5</ecNumber>
    </recommendedName>
</protein>
<organism>
    <name type="scientific">Burkholderia pseudomallei (strain 1710b)</name>
    <dbReference type="NCBI Taxonomy" id="320372"/>
    <lineage>
        <taxon>Bacteria</taxon>
        <taxon>Pseudomonadati</taxon>
        <taxon>Pseudomonadota</taxon>
        <taxon>Betaproteobacteria</taxon>
        <taxon>Burkholderiales</taxon>
        <taxon>Burkholderiaceae</taxon>
        <taxon>Burkholderia</taxon>
        <taxon>pseudomallei group</taxon>
    </lineage>
</organism>
<dbReference type="EC" id="6.3.1.5" evidence="1"/>
<dbReference type="EMBL" id="CP000125">
    <property type="protein sequence ID" value="ABA53106.1"/>
    <property type="molecule type" value="Genomic_DNA"/>
</dbReference>
<dbReference type="RefSeq" id="WP_004525360.1">
    <property type="nucleotide sequence ID" value="NC_007435.1"/>
</dbReference>
<dbReference type="PDB" id="3DPI">
    <property type="method" value="X-ray"/>
    <property type="resolution" value="2.20 A"/>
    <property type="chains" value="A/B=1-284"/>
</dbReference>
<dbReference type="PDBsum" id="3DPI"/>
<dbReference type="SMR" id="Q3JL79"/>
<dbReference type="EnsemblBacteria" id="ABA53106">
    <property type="protein sequence ID" value="ABA53106"/>
    <property type="gene ID" value="BURPS1710b_A0515"/>
</dbReference>
<dbReference type="GeneID" id="93063658"/>
<dbReference type="KEGG" id="bpm:BURPS1710b_A0515"/>
<dbReference type="HOGENOM" id="CLU_059327_3_0_4"/>
<dbReference type="UniPathway" id="UPA00253">
    <property type="reaction ID" value="UER00333"/>
</dbReference>
<dbReference type="EvolutionaryTrace" id="Q3JL79"/>
<dbReference type="Proteomes" id="UP000002700">
    <property type="component" value="Chromosome II"/>
</dbReference>
<dbReference type="GO" id="GO:0005737">
    <property type="term" value="C:cytoplasm"/>
    <property type="evidence" value="ECO:0007669"/>
    <property type="project" value="InterPro"/>
</dbReference>
<dbReference type="GO" id="GO:0005524">
    <property type="term" value="F:ATP binding"/>
    <property type="evidence" value="ECO:0007669"/>
    <property type="project" value="UniProtKB-UniRule"/>
</dbReference>
<dbReference type="GO" id="GO:0004359">
    <property type="term" value="F:glutaminase activity"/>
    <property type="evidence" value="ECO:0007669"/>
    <property type="project" value="InterPro"/>
</dbReference>
<dbReference type="GO" id="GO:0046872">
    <property type="term" value="F:metal ion binding"/>
    <property type="evidence" value="ECO:0007669"/>
    <property type="project" value="UniProtKB-KW"/>
</dbReference>
<dbReference type="GO" id="GO:0003952">
    <property type="term" value="F:NAD+ synthase (glutamine-hydrolyzing) activity"/>
    <property type="evidence" value="ECO:0007669"/>
    <property type="project" value="InterPro"/>
</dbReference>
<dbReference type="GO" id="GO:0008795">
    <property type="term" value="F:NAD+ synthase activity"/>
    <property type="evidence" value="ECO:0007669"/>
    <property type="project" value="UniProtKB-UniRule"/>
</dbReference>
<dbReference type="GO" id="GO:0009435">
    <property type="term" value="P:NAD biosynthetic process"/>
    <property type="evidence" value="ECO:0007669"/>
    <property type="project" value="UniProtKB-UniRule"/>
</dbReference>
<dbReference type="CDD" id="cd00553">
    <property type="entry name" value="NAD_synthase"/>
    <property type="match status" value="1"/>
</dbReference>
<dbReference type="Gene3D" id="3.40.50.620">
    <property type="entry name" value="HUPs"/>
    <property type="match status" value="1"/>
</dbReference>
<dbReference type="HAMAP" id="MF_00193">
    <property type="entry name" value="NadE_ammonia_dep"/>
    <property type="match status" value="1"/>
</dbReference>
<dbReference type="InterPro" id="IPR022310">
    <property type="entry name" value="NAD/GMP_synthase"/>
</dbReference>
<dbReference type="InterPro" id="IPR003694">
    <property type="entry name" value="NAD_synthase"/>
</dbReference>
<dbReference type="InterPro" id="IPR022926">
    <property type="entry name" value="NH(3)-dep_NAD(+)_synth"/>
</dbReference>
<dbReference type="InterPro" id="IPR014729">
    <property type="entry name" value="Rossmann-like_a/b/a_fold"/>
</dbReference>
<dbReference type="NCBIfam" id="TIGR00552">
    <property type="entry name" value="nadE"/>
    <property type="match status" value="1"/>
</dbReference>
<dbReference type="NCBIfam" id="NF001979">
    <property type="entry name" value="PRK00768.1"/>
    <property type="match status" value="1"/>
</dbReference>
<dbReference type="PANTHER" id="PTHR23090">
    <property type="entry name" value="NH 3 /GLUTAMINE-DEPENDENT NAD + SYNTHETASE"/>
    <property type="match status" value="1"/>
</dbReference>
<dbReference type="PANTHER" id="PTHR23090:SF7">
    <property type="entry name" value="NH(3)-DEPENDENT NAD(+) SYNTHETASE"/>
    <property type="match status" value="1"/>
</dbReference>
<dbReference type="Pfam" id="PF02540">
    <property type="entry name" value="NAD_synthase"/>
    <property type="match status" value="1"/>
</dbReference>
<dbReference type="SUPFAM" id="SSF52402">
    <property type="entry name" value="Adenine nucleotide alpha hydrolases-like"/>
    <property type="match status" value="1"/>
</dbReference>
<reference key="1">
    <citation type="journal article" date="2010" name="Genome Biol. Evol.">
        <title>Continuing evolution of Burkholderia mallei through genome reduction and large-scale rearrangements.</title>
        <authorList>
            <person name="Losada L."/>
            <person name="Ronning C.M."/>
            <person name="DeShazer D."/>
            <person name="Woods D."/>
            <person name="Fedorova N."/>
            <person name="Kim H.S."/>
            <person name="Shabalina S.A."/>
            <person name="Pearson T.R."/>
            <person name="Brinkac L."/>
            <person name="Tan P."/>
            <person name="Nandi T."/>
            <person name="Crabtree J."/>
            <person name="Badger J."/>
            <person name="Beckstrom-Sternberg S."/>
            <person name="Saqib M."/>
            <person name="Schutzer S.E."/>
            <person name="Keim P."/>
            <person name="Nierman W.C."/>
        </authorList>
    </citation>
    <scope>NUCLEOTIDE SEQUENCE [LARGE SCALE GENOMIC DNA]</scope>
    <source>
        <strain>1710b</strain>
    </source>
</reference>
<reference evidence="2" key="2">
    <citation type="submission" date="2008-07" db="PDB data bank">
        <title>Crystal structure of NAD+ synthetase from Burkholderia pseudomallei.</title>
        <authorList>
            <consortium name="Seattle structural genomics center for infectious disease (SSGCID)"/>
        </authorList>
    </citation>
    <scope>X-RAY CRYSTALLOGRAPHY (2.20 ANGSTROMS)</scope>
    <source>
        <strain>1710b</strain>
    </source>
</reference>
<feature type="chain" id="PRO_1000099011" description="NH(3)-dependent NAD(+) synthetase">
    <location>
        <begin position="1"/>
        <end position="284"/>
    </location>
</feature>
<feature type="binding site" evidence="1">
    <location>
        <begin position="51"/>
        <end position="58"/>
    </location>
    <ligand>
        <name>ATP</name>
        <dbReference type="ChEBI" id="CHEBI:30616"/>
    </ligand>
</feature>
<feature type="binding site" evidence="1">
    <location>
        <position position="57"/>
    </location>
    <ligand>
        <name>Mg(2+)</name>
        <dbReference type="ChEBI" id="CHEBI:18420"/>
    </ligand>
</feature>
<feature type="binding site" evidence="1">
    <location>
        <position position="148"/>
    </location>
    <ligand>
        <name>deamido-NAD(+)</name>
        <dbReference type="ChEBI" id="CHEBI:58437"/>
    </ligand>
</feature>
<feature type="binding site" evidence="1">
    <location>
        <position position="168"/>
    </location>
    <ligand>
        <name>ATP</name>
        <dbReference type="ChEBI" id="CHEBI:30616"/>
    </ligand>
</feature>
<feature type="binding site" evidence="1">
    <location>
        <position position="173"/>
    </location>
    <ligand>
        <name>Mg(2+)</name>
        <dbReference type="ChEBI" id="CHEBI:18420"/>
    </ligand>
</feature>
<feature type="binding site" evidence="1">
    <location>
        <position position="181"/>
    </location>
    <ligand>
        <name>deamido-NAD(+)</name>
        <dbReference type="ChEBI" id="CHEBI:58437"/>
    </ligand>
</feature>
<feature type="binding site" evidence="1">
    <location>
        <position position="188"/>
    </location>
    <ligand>
        <name>deamido-NAD(+)</name>
        <dbReference type="ChEBI" id="CHEBI:58437"/>
    </ligand>
</feature>
<feature type="binding site" evidence="1">
    <location>
        <position position="197"/>
    </location>
    <ligand>
        <name>ATP</name>
        <dbReference type="ChEBI" id="CHEBI:30616"/>
    </ligand>
</feature>
<feature type="binding site" evidence="1">
    <location>
        <position position="219"/>
    </location>
    <ligand>
        <name>ATP</name>
        <dbReference type="ChEBI" id="CHEBI:30616"/>
    </ligand>
</feature>
<feature type="binding site" evidence="1">
    <location>
        <begin position="268"/>
        <end position="269"/>
    </location>
    <ligand>
        <name>deamido-NAD(+)</name>
        <dbReference type="ChEBI" id="CHEBI:58437"/>
    </ligand>
</feature>
<feature type="helix" evidence="3">
    <location>
        <begin position="6"/>
        <end position="16"/>
    </location>
</feature>
<feature type="helix" evidence="3">
    <location>
        <begin position="25"/>
        <end position="43"/>
    </location>
</feature>
<feature type="strand" evidence="3">
    <location>
        <begin position="47"/>
        <end position="51"/>
    </location>
</feature>
<feature type="helix" evidence="3">
    <location>
        <begin position="56"/>
        <end position="74"/>
    </location>
</feature>
<feature type="strand" evidence="3">
    <location>
        <begin position="80"/>
        <end position="85"/>
    </location>
</feature>
<feature type="helix" evidence="3">
    <location>
        <begin position="95"/>
        <end position="104"/>
    </location>
</feature>
<feature type="strand" evidence="3">
    <location>
        <begin position="107"/>
        <end position="111"/>
    </location>
</feature>
<feature type="helix" evidence="3">
    <location>
        <begin position="115"/>
        <end position="127"/>
    </location>
</feature>
<feature type="helix" evidence="3">
    <location>
        <begin position="135"/>
        <end position="160"/>
    </location>
</feature>
<feature type="strand" evidence="3">
    <location>
        <begin position="163"/>
        <end position="166"/>
    </location>
</feature>
<feature type="helix" evidence="3">
    <location>
        <begin position="171"/>
        <end position="180"/>
    </location>
</feature>
<feature type="turn" evidence="3">
    <location>
        <begin position="191"/>
        <end position="194"/>
    </location>
</feature>
<feature type="helix" evidence="3">
    <location>
        <begin position="197"/>
        <end position="206"/>
    </location>
</feature>
<feature type="helix" evidence="3">
    <location>
        <begin position="211"/>
        <end position="214"/>
    </location>
</feature>
<feature type="helix" evidence="3">
    <location>
        <begin position="219"/>
        <end position="222"/>
    </location>
</feature>
<feature type="helix" evidence="3">
    <location>
        <begin position="223"/>
        <end position="225"/>
    </location>
</feature>
<feature type="helix" evidence="3">
    <location>
        <begin position="239"/>
        <end position="247"/>
    </location>
</feature>
<feature type="helix" evidence="3">
    <location>
        <begin position="253"/>
        <end position="271"/>
    </location>
</feature>
<sequence>MSRPDQAARRRAIAAELHVSPTFDARDEAERRIGFVADYLRTAGLRACVLGISGGIDSSTAGRLAQLAVERLRASGYDARFVAMRLPYGAQHDEADARRALAFVRADETLTVDVKPAADAMLAALAAGGLAYLDHAQQDFVLGNIKARERMIAQYAVAGARNGVVIGTDHAAESVMGFFTKFGDGGADVLPLAGLTKRRVRALARMLGADEPLVLKTPTADLETLRPQRPDEHAYGITYEQIDDFLEGKPMDDAVAETVLRFYDATRHKRALPYTMFDWPGHPA</sequence>
<evidence type="ECO:0000255" key="1">
    <source>
        <dbReference type="HAMAP-Rule" id="MF_00193"/>
    </source>
</evidence>
<evidence type="ECO:0007744" key="2">
    <source>
        <dbReference type="PDB" id="3DPI"/>
    </source>
</evidence>
<evidence type="ECO:0007829" key="3">
    <source>
        <dbReference type="PDB" id="3DPI"/>
    </source>
</evidence>